<proteinExistence type="inferred from homology"/>
<dbReference type="EMBL" id="FM200053">
    <property type="protein sequence ID" value="CAR59458.1"/>
    <property type="molecule type" value="Genomic_DNA"/>
</dbReference>
<dbReference type="RefSeq" id="WP_000092484.1">
    <property type="nucleotide sequence ID" value="NC_011147.1"/>
</dbReference>
<dbReference type="SMR" id="B5BKA2"/>
<dbReference type="KEGG" id="sek:SSPA1286"/>
<dbReference type="HOGENOM" id="CLU_078181_0_0_6"/>
<dbReference type="Proteomes" id="UP000001869">
    <property type="component" value="Chromosome"/>
</dbReference>
<dbReference type="GO" id="GO:0005737">
    <property type="term" value="C:cytoplasm"/>
    <property type="evidence" value="ECO:0007669"/>
    <property type="project" value="UniProtKB-SubCell"/>
</dbReference>
<dbReference type="GO" id="GO:0003677">
    <property type="term" value="F:DNA binding"/>
    <property type="evidence" value="ECO:0007669"/>
    <property type="project" value="UniProtKB-UniRule"/>
</dbReference>
<dbReference type="GO" id="GO:0006274">
    <property type="term" value="P:DNA replication termination"/>
    <property type="evidence" value="ECO:0007669"/>
    <property type="project" value="UniProtKB-UniRule"/>
</dbReference>
<dbReference type="Gene3D" id="3.30.54.10">
    <property type="match status" value="1"/>
</dbReference>
<dbReference type="Gene3D" id="3.50.14.10">
    <property type="entry name" value="Replication terminator Tus, domain 1 superfamily/Replication terminator Tus"/>
    <property type="match status" value="1"/>
</dbReference>
<dbReference type="HAMAP" id="MF_00483">
    <property type="entry name" value="Rep_term_Tus"/>
    <property type="match status" value="1"/>
</dbReference>
<dbReference type="InterPro" id="IPR008865">
    <property type="entry name" value="DNA_replication_term_site-bd"/>
</dbReference>
<dbReference type="InterPro" id="IPR036381">
    <property type="entry name" value="Tus_dom1"/>
</dbReference>
<dbReference type="InterPro" id="IPR036384">
    <property type="entry name" value="Tus_sf"/>
</dbReference>
<dbReference type="NCBIfam" id="TIGR02648">
    <property type="entry name" value="rep_term_tus"/>
    <property type="match status" value="1"/>
</dbReference>
<dbReference type="Pfam" id="PF05472">
    <property type="entry name" value="Ter"/>
    <property type="match status" value="1"/>
</dbReference>
<dbReference type="SUPFAM" id="SSF56596">
    <property type="entry name" value="Replication terminator protein (Tus)"/>
    <property type="match status" value="1"/>
</dbReference>
<keyword id="KW-0963">Cytoplasm</keyword>
<keyword id="KW-0235">DNA replication</keyword>
<keyword id="KW-0238">DNA-binding</keyword>
<protein>
    <recommendedName>
        <fullName evidence="1">DNA replication terminus site-binding protein</fullName>
        <shortName evidence="1">Ter-binding protein</shortName>
    </recommendedName>
</protein>
<comment type="function">
    <text evidence="1">Trans-acting protein required for termination of DNA replication. Binds to DNA replication terminator sequences (terA to terF) to prevent the passage of replication forks. The termination efficiency will be affected by the affinity of this protein for the terminator sequence.</text>
</comment>
<comment type="subcellular location">
    <subcellularLocation>
        <location evidence="1">Cytoplasm</location>
    </subcellularLocation>
</comment>
<comment type="similarity">
    <text evidence="1">Belongs to the Tus family.</text>
</comment>
<feature type="chain" id="PRO_1000126048" description="DNA replication terminus site-binding protein">
    <location>
        <begin position="1"/>
        <end position="309"/>
    </location>
</feature>
<organism>
    <name type="scientific">Salmonella paratyphi A (strain AKU_12601)</name>
    <dbReference type="NCBI Taxonomy" id="554290"/>
    <lineage>
        <taxon>Bacteria</taxon>
        <taxon>Pseudomonadati</taxon>
        <taxon>Pseudomonadota</taxon>
        <taxon>Gammaproteobacteria</taxon>
        <taxon>Enterobacterales</taxon>
        <taxon>Enterobacteriaceae</taxon>
        <taxon>Salmonella</taxon>
    </lineage>
</organism>
<sequence>MSRYDLVERLNGTFRQIEQHLAALTDNLQQHSLLIARIFSLPQVTKEAEHAPLDTIEVTQHLGKEAEALALRHYRHLFIQQQSENRSSKAAVRLPGVLCYQVDNATQLDLENQIQRINQLKTTFEQMVTVESGLPSAARFEWVHRHLPGLITLNAYRTLTLINNPATIRFGWANKHIIKNLSRDEVLSQLKKSLASPRSVPPWTREQWQFKLEREYQDIAALPQQARLKIKRPVKVQPIARIWYKGQQKQVQHACPTPIIALINTDNGAGVPDIGGLENYDADNIQHRFKPQAQPLRLIIPRLHLYVAD</sequence>
<reference key="1">
    <citation type="journal article" date="2009" name="BMC Genomics">
        <title>Pseudogene accumulation in the evolutionary histories of Salmonella enterica serovars Paratyphi A and Typhi.</title>
        <authorList>
            <person name="Holt K.E."/>
            <person name="Thomson N.R."/>
            <person name="Wain J."/>
            <person name="Langridge G.C."/>
            <person name="Hasan R."/>
            <person name="Bhutta Z.A."/>
            <person name="Quail M.A."/>
            <person name="Norbertczak H."/>
            <person name="Walker D."/>
            <person name="Simmonds M."/>
            <person name="White B."/>
            <person name="Bason N."/>
            <person name="Mungall K."/>
            <person name="Dougan G."/>
            <person name="Parkhill J."/>
        </authorList>
    </citation>
    <scope>NUCLEOTIDE SEQUENCE [LARGE SCALE GENOMIC DNA]</scope>
    <source>
        <strain>AKU_12601</strain>
    </source>
</reference>
<name>TUS_SALPK</name>
<accession>B5BKA2</accession>
<gene>
    <name evidence="1" type="primary">tus</name>
    <name type="ordered locus">SSPA1286</name>
</gene>
<evidence type="ECO:0000255" key="1">
    <source>
        <dbReference type="HAMAP-Rule" id="MF_00483"/>
    </source>
</evidence>